<reference key="1">
    <citation type="journal article" date="1989" name="Cell">
        <title>The v-myb oncogene product binds to and activates the promyelocyte-specific mim-1 gene.</title>
        <authorList>
            <person name="Ness S.A."/>
            <person name="Marknell A."/>
            <person name="Graf T."/>
        </authorList>
    </citation>
    <scope>NUCLEOTIDE SEQUENCE [GENOMIC DNA / MRNA]</scope>
    <scope>SUBCELLULAR LOCATION</scope>
    <scope>INDUCTION BY THE MYB ONCOGENE</scope>
</reference>
<reference key="2">
    <citation type="journal article" date="1992" name="FEBS Lett.">
        <title>p33, an endogenous target protein for arginine-specific ADP-ribosyltransferase in chicken polymorphonuclear leukocytes, is highly homologous to mim-1 protein (myb-induced myeloid protein-1).</title>
        <authorList>
            <person name="Yamada K."/>
            <person name="Tsuchiya M."/>
            <person name="Mishima K."/>
            <person name="Shimoyama M."/>
        </authorList>
    </citation>
    <scope>PARTIAL PROTEIN SEQUENCE</scope>
    <scope>NUCLEOTIDE SEQUENCE [MRNA] OF 295-299</scope>
    <scope>PTM</scope>
    <source>
        <strain>White leghorn</strain>
    </source>
</reference>
<protein>
    <recommendedName>
        <fullName>Myeloid protein 1</fullName>
    </recommendedName>
    <alternativeName>
        <fullName>p33</fullName>
    </alternativeName>
</protein>
<keyword id="KW-0903">Direct protein sequencing</keyword>
<keyword id="KW-1015">Disulfide bond</keyword>
<keyword id="KW-0479">Metal-binding</keyword>
<keyword id="KW-1185">Reference proteome</keyword>
<keyword id="KW-0677">Repeat</keyword>
<keyword id="KW-0732">Signal</keyword>
<keyword id="KW-0862">Zinc</keyword>
<gene>
    <name type="primary">MIM1</name>
    <name type="synonym">MIM-1</name>
</gene>
<accession>P08940</accession>
<proteinExistence type="evidence at protein level"/>
<dbReference type="EMBL" id="M29448">
    <property type="protein sequence ID" value="AAA48954.1"/>
    <property type="molecule type" value="Genomic_DNA"/>
</dbReference>
<dbReference type="EMBL" id="M29449">
    <property type="protein sequence ID" value="AAA48958.1"/>
    <property type="molecule type" value="mRNA"/>
</dbReference>
<dbReference type="PIR" id="A33755">
    <property type="entry name" value="A33755"/>
</dbReference>
<dbReference type="SMR" id="P08940"/>
<dbReference type="STRING" id="9031.ENSGALP00000010210"/>
<dbReference type="PaxDb" id="9031-ENSGALP00000010210"/>
<dbReference type="VEuPathDB" id="HostDB:geneid_396471"/>
<dbReference type="eggNOG" id="ENOG502S16D">
    <property type="taxonomic scope" value="Eukaryota"/>
</dbReference>
<dbReference type="InParanoid" id="P08940"/>
<dbReference type="Proteomes" id="UP000000539">
    <property type="component" value="Unassembled WGS sequence"/>
</dbReference>
<dbReference type="GO" id="GO:0044194">
    <property type="term" value="C:cytolytic granule"/>
    <property type="evidence" value="ECO:0000314"/>
    <property type="project" value="AgBase"/>
</dbReference>
<dbReference type="GO" id="GO:0005615">
    <property type="term" value="C:extracellular space"/>
    <property type="evidence" value="ECO:0000314"/>
    <property type="project" value="AgBase"/>
</dbReference>
<dbReference type="GO" id="GO:0046872">
    <property type="term" value="F:metal ion binding"/>
    <property type="evidence" value="ECO:0007669"/>
    <property type="project" value="UniProtKB-KW"/>
</dbReference>
<dbReference type="GO" id="GO:0030851">
    <property type="term" value="P:granulocyte differentiation"/>
    <property type="evidence" value="ECO:0000270"/>
    <property type="project" value="AgBase"/>
</dbReference>
<dbReference type="GO" id="GO:0046677">
    <property type="term" value="P:response to antibiotic"/>
    <property type="evidence" value="ECO:0000314"/>
    <property type="project" value="AgBase"/>
</dbReference>
<dbReference type="FunFam" id="2.70.70.10:FF:000011">
    <property type="entry name" value="Leukocyte cell-derived chemotaxin-2"/>
    <property type="match status" value="2"/>
</dbReference>
<dbReference type="Gene3D" id="2.70.70.10">
    <property type="entry name" value="Glucose Permease (Domain IIA)"/>
    <property type="match status" value="2"/>
</dbReference>
<dbReference type="InterPro" id="IPR011055">
    <property type="entry name" value="Dup_hybrid_motif"/>
</dbReference>
<dbReference type="InterPro" id="IPR008663">
    <property type="entry name" value="LECT2"/>
</dbReference>
<dbReference type="PANTHER" id="PTHR11329">
    <property type="entry name" value="LEUKOCYTE CELL-DERIVED CHEMOTAXIN 2"/>
    <property type="match status" value="1"/>
</dbReference>
<dbReference type="PANTHER" id="PTHR11329:SF0">
    <property type="entry name" value="LEUKOCYTE CELL-DERIVED CHEMOTAXIN-2"/>
    <property type="match status" value="1"/>
</dbReference>
<sequence length="326" mass="35637">MPALSLIALLSLVSTAFARQWEVHPPQQQGRHWAQICSGNPFNRIRGCDRYGCGNYGASRQGKGEKHKGVDVICTDGSIVYAPFSGQLSGPIRFFHNGNAIDDGVQISGSGYCVKLVCIHPIRYHGQIQKGQQLGRMLPMQKVFPGIVSHIHVENCDQSDPTHLLRPIPDISPPFPQQDAHWAVVCAGNPTNEIRGCDKYGCGYFGAPRRNGKGEKHKGVDVICADGATVYAPFSGELSGPVKFFHNGNAIDDGVQIRGSGFCVKLLCIHPIRYNGRISKGQVLGRMLPMQRVFPGIISHIHVENCDRSDPTSNLERGKGESEMEV</sequence>
<organism>
    <name type="scientific">Gallus gallus</name>
    <name type="common">Chicken</name>
    <dbReference type="NCBI Taxonomy" id="9031"/>
    <lineage>
        <taxon>Eukaryota</taxon>
        <taxon>Metazoa</taxon>
        <taxon>Chordata</taxon>
        <taxon>Craniata</taxon>
        <taxon>Vertebrata</taxon>
        <taxon>Euteleostomi</taxon>
        <taxon>Archelosauria</taxon>
        <taxon>Archosauria</taxon>
        <taxon>Dinosauria</taxon>
        <taxon>Saurischia</taxon>
        <taxon>Theropoda</taxon>
        <taxon>Coelurosauria</taxon>
        <taxon>Aves</taxon>
        <taxon>Neognathae</taxon>
        <taxon>Galloanserae</taxon>
        <taxon>Galliformes</taxon>
        <taxon>Phasianidae</taxon>
        <taxon>Phasianinae</taxon>
        <taxon>Gallus</taxon>
    </lineage>
</organism>
<comment type="subcellular location">
    <subcellularLocation>
        <location evidence="5">Cytoplasmic granule</location>
    </subcellularLocation>
    <text evidence="5">Granules of promyelocytes.</text>
</comment>
<comment type="induction">
    <text evidence="5">By the Myb oncogene.</text>
</comment>
<comment type="PTM">
    <text evidence="4">Substrate for arginine-specific ADP-ribosyltransferase.</text>
</comment>
<comment type="similarity">
    <text evidence="6">Belongs to the LECT2/MIM-1 family.</text>
</comment>
<feature type="signal peptide" evidence="2">
    <location>
        <begin position="1"/>
        <end position="18"/>
    </location>
</feature>
<feature type="chain" id="PRO_0000017366" description="Myeloid protein 1">
    <location>
        <begin position="19"/>
        <end position="326"/>
    </location>
</feature>
<feature type="repeat" description="1" evidence="6">
    <location>
        <begin position="28"/>
        <end position="162"/>
    </location>
</feature>
<feature type="repeat" description="2" evidence="6">
    <location>
        <begin position="177"/>
        <end position="312"/>
    </location>
</feature>
<feature type="region of interest" description="Disordered" evidence="3">
    <location>
        <begin position="307"/>
        <end position="326"/>
    </location>
</feature>
<feature type="binding site" evidence="1">
    <location>
        <position position="67"/>
    </location>
    <ligand>
        <name>Zn(2+)</name>
        <dbReference type="ChEBI" id="CHEBI:29105"/>
    </ligand>
</feature>
<feature type="binding site" evidence="1">
    <location>
        <position position="71"/>
    </location>
    <ligand>
        <name>Zn(2+)</name>
        <dbReference type="ChEBI" id="CHEBI:29105"/>
    </ligand>
</feature>
<feature type="binding site" evidence="1">
    <location>
        <position position="152"/>
    </location>
    <ligand>
        <name>Zn(2+)</name>
        <dbReference type="ChEBI" id="CHEBI:29105"/>
    </ligand>
</feature>
<feature type="disulfide bond" evidence="1">
    <location>
        <begin position="37"/>
        <end position="74"/>
    </location>
</feature>
<feature type="disulfide bond" evidence="1">
    <location>
        <begin position="48"/>
        <end position="53"/>
    </location>
</feature>
<feature type="disulfide bond" evidence="1">
    <location>
        <begin position="113"/>
        <end position="156"/>
    </location>
</feature>
<feature type="sequence conflict" description="In Ref. 1; AAA48954/AAA48958." evidence="6" ref="1">
    <original>I</original>
    <variation>Y</variation>
    <location>
        <position position="297"/>
    </location>
</feature>
<evidence type="ECO:0000250" key="1">
    <source>
        <dbReference type="UniProtKB" id="O14960"/>
    </source>
</evidence>
<evidence type="ECO:0000250" key="2">
    <source>
        <dbReference type="UniProtKB" id="O62644"/>
    </source>
</evidence>
<evidence type="ECO:0000256" key="3">
    <source>
        <dbReference type="SAM" id="MobiDB-lite"/>
    </source>
</evidence>
<evidence type="ECO:0000269" key="4">
    <source>
    </source>
</evidence>
<evidence type="ECO:0000269" key="5">
    <source>
    </source>
</evidence>
<evidence type="ECO:0000305" key="6"/>
<name>MIM1_CHICK</name>